<feature type="chain" id="PRO_0000141127" description="Ribose-phosphate pyrophosphokinase">
    <location>
        <begin position="1"/>
        <end position="319"/>
    </location>
</feature>
<feature type="active site" evidence="1">
    <location>
        <position position="199"/>
    </location>
</feature>
<feature type="binding site" evidence="1">
    <location>
        <begin position="41"/>
        <end position="43"/>
    </location>
    <ligand>
        <name>ATP</name>
        <dbReference type="ChEBI" id="CHEBI:30616"/>
    </ligand>
</feature>
<feature type="binding site" evidence="1">
    <location>
        <begin position="100"/>
        <end position="101"/>
    </location>
    <ligand>
        <name>ATP</name>
        <dbReference type="ChEBI" id="CHEBI:30616"/>
    </ligand>
</feature>
<feature type="binding site" evidence="1">
    <location>
        <position position="134"/>
    </location>
    <ligand>
        <name>Mg(2+)</name>
        <dbReference type="ChEBI" id="CHEBI:18420"/>
        <label>1</label>
    </ligand>
</feature>
<feature type="binding site" evidence="1">
    <location>
        <position position="176"/>
    </location>
    <ligand>
        <name>Mg(2+)</name>
        <dbReference type="ChEBI" id="CHEBI:18420"/>
        <label>2</label>
    </ligand>
</feature>
<feature type="binding site" evidence="1">
    <location>
        <position position="201"/>
    </location>
    <ligand>
        <name>D-ribose 5-phosphate</name>
        <dbReference type="ChEBI" id="CHEBI:78346"/>
    </ligand>
</feature>
<feature type="binding site" evidence="1">
    <location>
        <position position="225"/>
    </location>
    <ligand>
        <name>D-ribose 5-phosphate</name>
        <dbReference type="ChEBI" id="CHEBI:78346"/>
    </ligand>
</feature>
<feature type="binding site" evidence="1">
    <location>
        <begin position="229"/>
        <end position="233"/>
    </location>
    <ligand>
        <name>D-ribose 5-phosphate</name>
        <dbReference type="ChEBI" id="CHEBI:78346"/>
    </ligand>
</feature>
<reference key="1">
    <citation type="journal article" date="2002" name="Proc. Natl. Acad. Sci. U.S.A.">
        <title>Complete genome sequence of Clostridium perfringens, an anaerobic flesh-eater.</title>
        <authorList>
            <person name="Shimizu T."/>
            <person name="Ohtani K."/>
            <person name="Hirakawa H."/>
            <person name="Ohshima K."/>
            <person name="Yamashita A."/>
            <person name="Shiba T."/>
            <person name="Ogasawara N."/>
            <person name="Hattori M."/>
            <person name="Kuhara S."/>
            <person name="Hayashi H."/>
        </authorList>
    </citation>
    <scope>NUCLEOTIDE SEQUENCE [LARGE SCALE GENOMIC DNA]</scope>
    <source>
        <strain>13 / Type A</strain>
    </source>
</reference>
<organism>
    <name type="scientific">Clostridium perfringens (strain 13 / Type A)</name>
    <dbReference type="NCBI Taxonomy" id="195102"/>
    <lineage>
        <taxon>Bacteria</taxon>
        <taxon>Bacillati</taxon>
        <taxon>Bacillota</taxon>
        <taxon>Clostridia</taxon>
        <taxon>Eubacteriales</taxon>
        <taxon>Clostridiaceae</taxon>
        <taxon>Clostridium</taxon>
    </lineage>
</organism>
<proteinExistence type="inferred from homology"/>
<accession>Q8XHJ4</accession>
<name>KPRS_CLOPE</name>
<gene>
    <name evidence="1" type="primary">prs</name>
    <name type="ordered locus">CPE2489</name>
</gene>
<sequence>MENHSKNIKIFTGNSHPELAREIAKALNIPLGKAEVGTFSDGEISVNIKETVRGCDVFIVQSTCSPVNNNLMELLIMIDAFKRASAGRINAVIPYYGYARQDRKAKSRDPITAKLVADLLTAAGADRVLTMDLHAAQIQGYFNIPVDHLLGSPILAKYFVEKGLADRDDVVVVSPDLGSVTRARKFADKLNAPIAIIDKRRPKANVSEIMNIIGDVKDKVCILIDDMIDTAGTITNAANALKDLGAKNVYACCTHGVLSGPAFERINNSAIEELVMLNTIALPEGEGLNKFKSLSVAPIMADAINRIYDDEPLSGLFQD</sequence>
<dbReference type="EC" id="2.7.6.1" evidence="1"/>
<dbReference type="EMBL" id="BA000016">
    <property type="protein sequence ID" value="BAB82195.1"/>
    <property type="molecule type" value="Genomic_DNA"/>
</dbReference>
<dbReference type="RefSeq" id="WP_003456820.1">
    <property type="nucleotide sequence ID" value="NC_003366.1"/>
</dbReference>
<dbReference type="SMR" id="Q8XHJ4"/>
<dbReference type="STRING" id="195102.gene:10491823"/>
<dbReference type="KEGG" id="cpe:CPE2489"/>
<dbReference type="HOGENOM" id="CLU_033546_2_0_9"/>
<dbReference type="UniPathway" id="UPA00087">
    <property type="reaction ID" value="UER00172"/>
</dbReference>
<dbReference type="Proteomes" id="UP000000818">
    <property type="component" value="Chromosome"/>
</dbReference>
<dbReference type="GO" id="GO:0005737">
    <property type="term" value="C:cytoplasm"/>
    <property type="evidence" value="ECO:0007669"/>
    <property type="project" value="UniProtKB-SubCell"/>
</dbReference>
<dbReference type="GO" id="GO:0002189">
    <property type="term" value="C:ribose phosphate diphosphokinase complex"/>
    <property type="evidence" value="ECO:0007669"/>
    <property type="project" value="TreeGrafter"/>
</dbReference>
<dbReference type="GO" id="GO:0005524">
    <property type="term" value="F:ATP binding"/>
    <property type="evidence" value="ECO:0007669"/>
    <property type="project" value="UniProtKB-KW"/>
</dbReference>
<dbReference type="GO" id="GO:0016301">
    <property type="term" value="F:kinase activity"/>
    <property type="evidence" value="ECO:0007669"/>
    <property type="project" value="UniProtKB-KW"/>
</dbReference>
<dbReference type="GO" id="GO:0000287">
    <property type="term" value="F:magnesium ion binding"/>
    <property type="evidence" value="ECO:0007669"/>
    <property type="project" value="UniProtKB-UniRule"/>
</dbReference>
<dbReference type="GO" id="GO:0004749">
    <property type="term" value="F:ribose phosphate diphosphokinase activity"/>
    <property type="evidence" value="ECO:0007669"/>
    <property type="project" value="UniProtKB-UniRule"/>
</dbReference>
<dbReference type="GO" id="GO:0006015">
    <property type="term" value="P:5-phosphoribose 1-diphosphate biosynthetic process"/>
    <property type="evidence" value="ECO:0007669"/>
    <property type="project" value="UniProtKB-UniRule"/>
</dbReference>
<dbReference type="GO" id="GO:0006164">
    <property type="term" value="P:purine nucleotide biosynthetic process"/>
    <property type="evidence" value="ECO:0007669"/>
    <property type="project" value="TreeGrafter"/>
</dbReference>
<dbReference type="GO" id="GO:0009156">
    <property type="term" value="P:ribonucleoside monophosphate biosynthetic process"/>
    <property type="evidence" value="ECO:0007669"/>
    <property type="project" value="InterPro"/>
</dbReference>
<dbReference type="CDD" id="cd06223">
    <property type="entry name" value="PRTases_typeI"/>
    <property type="match status" value="1"/>
</dbReference>
<dbReference type="FunFam" id="3.40.50.2020:FF:000002">
    <property type="entry name" value="Ribose-phosphate pyrophosphokinase"/>
    <property type="match status" value="1"/>
</dbReference>
<dbReference type="FunFam" id="3.40.50.2020:FF:000014">
    <property type="entry name" value="Ribose-phosphate pyrophosphokinase 1"/>
    <property type="match status" value="1"/>
</dbReference>
<dbReference type="Gene3D" id="3.40.50.2020">
    <property type="match status" value="2"/>
</dbReference>
<dbReference type="HAMAP" id="MF_00583_B">
    <property type="entry name" value="RibP_PPkinase_B"/>
    <property type="match status" value="1"/>
</dbReference>
<dbReference type="InterPro" id="IPR000842">
    <property type="entry name" value="PRib_PP_synth_CS"/>
</dbReference>
<dbReference type="InterPro" id="IPR029099">
    <property type="entry name" value="Pribosyltran_N"/>
</dbReference>
<dbReference type="InterPro" id="IPR000836">
    <property type="entry name" value="PRibTrfase_dom"/>
</dbReference>
<dbReference type="InterPro" id="IPR029057">
    <property type="entry name" value="PRTase-like"/>
</dbReference>
<dbReference type="InterPro" id="IPR005946">
    <property type="entry name" value="Rib-P_diPkinase"/>
</dbReference>
<dbReference type="InterPro" id="IPR037515">
    <property type="entry name" value="Rib-P_diPkinase_bac"/>
</dbReference>
<dbReference type="NCBIfam" id="NF002320">
    <property type="entry name" value="PRK01259.1"/>
    <property type="match status" value="1"/>
</dbReference>
<dbReference type="NCBIfam" id="NF002618">
    <property type="entry name" value="PRK02269.1"/>
    <property type="match status" value="1"/>
</dbReference>
<dbReference type="NCBIfam" id="TIGR01251">
    <property type="entry name" value="ribP_PPkin"/>
    <property type="match status" value="1"/>
</dbReference>
<dbReference type="PANTHER" id="PTHR10210">
    <property type="entry name" value="RIBOSE-PHOSPHATE DIPHOSPHOKINASE FAMILY MEMBER"/>
    <property type="match status" value="1"/>
</dbReference>
<dbReference type="PANTHER" id="PTHR10210:SF41">
    <property type="entry name" value="RIBOSE-PHOSPHATE PYROPHOSPHOKINASE 1, CHLOROPLASTIC"/>
    <property type="match status" value="1"/>
</dbReference>
<dbReference type="Pfam" id="PF14572">
    <property type="entry name" value="Pribosyl_synth"/>
    <property type="match status" value="1"/>
</dbReference>
<dbReference type="Pfam" id="PF13793">
    <property type="entry name" value="Pribosyltran_N"/>
    <property type="match status" value="1"/>
</dbReference>
<dbReference type="SMART" id="SM01400">
    <property type="entry name" value="Pribosyltran_N"/>
    <property type="match status" value="1"/>
</dbReference>
<dbReference type="SUPFAM" id="SSF53271">
    <property type="entry name" value="PRTase-like"/>
    <property type="match status" value="1"/>
</dbReference>
<dbReference type="PROSITE" id="PS00114">
    <property type="entry name" value="PRPP_SYNTHASE"/>
    <property type="match status" value="1"/>
</dbReference>
<evidence type="ECO:0000255" key="1">
    <source>
        <dbReference type="HAMAP-Rule" id="MF_00583"/>
    </source>
</evidence>
<protein>
    <recommendedName>
        <fullName evidence="1">Ribose-phosphate pyrophosphokinase</fullName>
        <shortName evidence="1">RPPK</shortName>
        <ecNumber evidence="1">2.7.6.1</ecNumber>
    </recommendedName>
    <alternativeName>
        <fullName evidence="1">5-phospho-D-ribosyl alpha-1-diphosphate synthase</fullName>
    </alternativeName>
    <alternativeName>
        <fullName evidence="1">Phosphoribosyl diphosphate synthase</fullName>
    </alternativeName>
    <alternativeName>
        <fullName evidence="1">Phosphoribosyl pyrophosphate synthase</fullName>
        <shortName evidence="1">P-Rib-PP synthase</shortName>
        <shortName evidence="1">PRPP synthase</shortName>
        <shortName evidence="1">PRPPase</shortName>
    </alternativeName>
</protein>
<keyword id="KW-0067">ATP-binding</keyword>
<keyword id="KW-0963">Cytoplasm</keyword>
<keyword id="KW-0418">Kinase</keyword>
<keyword id="KW-0460">Magnesium</keyword>
<keyword id="KW-0479">Metal-binding</keyword>
<keyword id="KW-0545">Nucleotide biosynthesis</keyword>
<keyword id="KW-0547">Nucleotide-binding</keyword>
<keyword id="KW-1185">Reference proteome</keyword>
<keyword id="KW-0808">Transferase</keyword>
<comment type="function">
    <text evidence="1">Involved in the biosynthesis of the central metabolite phospho-alpha-D-ribosyl-1-pyrophosphate (PRPP) via the transfer of pyrophosphoryl group from ATP to 1-hydroxyl of ribose-5-phosphate (Rib-5-P).</text>
</comment>
<comment type="catalytic activity">
    <reaction evidence="1">
        <text>D-ribose 5-phosphate + ATP = 5-phospho-alpha-D-ribose 1-diphosphate + AMP + H(+)</text>
        <dbReference type="Rhea" id="RHEA:15609"/>
        <dbReference type="ChEBI" id="CHEBI:15378"/>
        <dbReference type="ChEBI" id="CHEBI:30616"/>
        <dbReference type="ChEBI" id="CHEBI:58017"/>
        <dbReference type="ChEBI" id="CHEBI:78346"/>
        <dbReference type="ChEBI" id="CHEBI:456215"/>
        <dbReference type="EC" id="2.7.6.1"/>
    </reaction>
</comment>
<comment type="cofactor">
    <cofactor evidence="1">
        <name>Mg(2+)</name>
        <dbReference type="ChEBI" id="CHEBI:18420"/>
    </cofactor>
    <text evidence="1">Binds 2 Mg(2+) ions per subunit.</text>
</comment>
<comment type="pathway">
    <text evidence="1">Metabolic intermediate biosynthesis; 5-phospho-alpha-D-ribose 1-diphosphate biosynthesis; 5-phospho-alpha-D-ribose 1-diphosphate from D-ribose 5-phosphate (route I): step 1/1.</text>
</comment>
<comment type="subunit">
    <text evidence="1">Homohexamer.</text>
</comment>
<comment type="subcellular location">
    <subcellularLocation>
        <location evidence="1">Cytoplasm</location>
    </subcellularLocation>
</comment>
<comment type="similarity">
    <text evidence="1">Belongs to the ribose-phosphate pyrophosphokinase family. Class I subfamily.</text>
</comment>